<organismHost>
    <name type="scientific">Meleagris gallopavo</name>
    <name type="common">Wild turkey</name>
    <dbReference type="NCBI Taxonomy" id="9103"/>
</organismHost>
<evidence type="ECO:0000255" key="1">
    <source>
        <dbReference type="HAMAP-Rule" id="MF_04097"/>
    </source>
</evidence>
<evidence type="ECO:0000255" key="2">
    <source>
        <dbReference type="PROSITE-ProRule" id="PRU01276"/>
    </source>
</evidence>
<evidence type="ECO:0000255" key="3">
    <source>
        <dbReference type="PROSITE-ProRule" id="PRU01277"/>
    </source>
</evidence>
<evidence type="ECO:0000256" key="4">
    <source>
        <dbReference type="SAM" id="MobiDB-lite"/>
    </source>
</evidence>
<proteinExistence type="inferred from homology"/>
<feature type="chain" id="PRO_0000106019" description="Nucleoprotein">
    <location>
        <begin position="1"/>
        <end position="409"/>
    </location>
</feature>
<feature type="domain" description="CoV N NTD" evidence="2">
    <location>
        <begin position="31"/>
        <end position="156"/>
    </location>
</feature>
<feature type="domain" description="CoV N CTD" evidence="3">
    <location>
        <begin position="215"/>
        <end position="331"/>
    </location>
</feature>
<feature type="region of interest" description="Disordered" evidence="4">
    <location>
        <begin position="1"/>
        <end position="31"/>
    </location>
</feature>
<feature type="region of interest" description="RNA-binding" evidence="1">
    <location>
        <begin position="29"/>
        <end position="160"/>
    </location>
</feature>
<feature type="region of interest" description="Disordered" evidence="4">
    <location>
        <begin position="46"/>
        <end position="83"/>
    </location>
</feature>
<feature type="region of interest" description="Disordered" evidence="4">
    <location>
        <begin position="121"/>
        <end position="149"/>
    </location>
</feature>
<feature type="region of interest" description="Disordered" evidence="4">
    <location>
        <begin position="164"/>
        <end position="193"/>
    </location>
</feature>
<feature type="region of interest" description="Dimerization" evidence="1">
    <location>
        <begin position="226"/>
        <end position="333"/>
    </location>
</feature>
<feature type="region of interest" description="Disordered" evidence="4">
    <location>
        <begin position="327"/>
        <end position="409"/>
    </location>
</feature>
<feature type="compositionally biased region" description="Low complexity" evidence="4">
    <location>
        <begin position="15"/>
        <end position="31"/>
    </location>
</feature>
<feature type="compositionally biased region" description="Basic residues" evidence="4">
    <location>
        <begin position="70"/>
        <end position="83"/>
    </location>
</feature>
<feature type="compositionally biased region" description="Low complexity" evidence="4">
    <location>
        <begin position="164"/>
        <end position="179"/>
    </location>
</feature>
<feature type="compositionally biased region" description="Basic and acidic residues" evidence="4">
    <location>
        <begin position="180"/>
        <end position="192"/>
    </location>
</feature>
<feature type="compositionally biased region" description="Polar residues" evidence="4">
    <location>
        <begin position="341"/>
        <end position="355"/>
    </location>
</feature>
<feature type="compositionally biased region" description="Basic residues" evidence="4">
    <location>
        <begin position="358"/>
        <end position="367"/>
    </location>
</feature>
<feature type="compositionally biased region" description="Basic and acidic residues" evidence="4">
    <location>
        <begin position="368"/>
        <end position="384"/>
    </location>
</feature>
<feature type="modified residue" description="Phosphoserine; by host" evidence="1">
    <location>
        <position position="190"/>
    </location>
</feature>
<feature type="modified residue" description="Phosphothreonine; by host" evidence="1">
    <location>
        <position position="378"/>
    </location>
</feature>
<feature type="modified residue" description="Phosphoserine; by host" evidence="1">
    <location>
        <position position="379"/>
    </location>
</feature>
<feature type="disulfide bond" evidence="1">
    <location>
        <begin position="320"/>
        <end position="323"/>
    </location>
</feature>
<protein>
    <recommendedName>
        <fullName evidence="1">Nucleoprotein</fullName>
    </recommendedName>
    <alternativeName>
        <fullName evidence="1">Nucleocapsid protein</fullName>
        <shortName evidence="1">NC</shortName>
        <shortName evidence="1">Protein N</shortName>
    </alternativeName>
</protein>
<comment type="function">
    <text evidence="1">Packages the positive strand viral genome RNA into a helical ribonucleocapsid (RNP) and plays a fundamental role during virion assembly through its interactions with the viral genome and membrane protein M. Plays an important role in enhancing the efficiency of subgenomic viral RNA transcription as well as viral replication.</text>
</comment>
<comment type="subunit">
    <text evidence="1">Homooligomer. Both monomeric and oligomeric forms interact with RNA. Interacts with protein M. Interacts with NSP3; this interaction serves to tether the genome to the newly translated replicase-transcriptase complex at a very early stage of infection.</text>
</comment>
<comment type="subcellular location">
    <subcellularLocation>
        <location evidence="1">Virion</location>
    </subcellularLocation>
    <subcellularLocation>
        <location evidence="1">Host endoplasmic reticulum-Golgi intermediate compartment</location>
    </subcellularLocation>
    <subcellularLocation>
        <location evidence="1">Host Golgi apparatus</location>
    </subcellularLocation>
    <text evidence="1">Located inside the virion, complexed with the viral RNA. Probably associates with ER-derived membranes where it participates in viral RNA synthesis and virus budding.</text>
</comment>
<comment type="PTM">
    <text evidence="1">ADP-ribosylated. The ADP-ribosylation is retained in the virion during infection.</text>
</comment>
<comment type="PTM">
    <text evidence="1">Phosphorylated on serine and threonine residues.</text>
</comment>
<comment type="similarity">
    <text evidence="1">Belongs to the gammacoronavirus nucleocapsid protein family.</text>
</comment>
<sequence>MASGKATGKTDAPAPVIKLGGPKPPKVGSSGSVSWFQAIKAKKLNSPQPKFEGSGVPDNENLKTSQQHGYWRRQARFKSSRGGRKPVPDAWYFYYTGTGPAADLQWGDSQAGIVWVAAKGADVKSKSNQGTRDPDKFDQYPLRFSDGGPDGNFRWDFIPLNRGRSGRSTAVSSAASSRAPSREGSRGRRSGAEDDLIARAAKIIQDQQKKGSRITKAKAEEMAHRRYCKRTVPPGYKVEQVFGPRTKGKEGNFGDDKMNEEGIKDGRVTAMLNLVPSSHACLFASKLTPKLQPDGLHLKFEFTTVVPRDDPQFDNYVSICDQCVDGVGTRPKDDEPRPKSRASSRPATRGNSPAPRQQRLKKEKKPKKQDDEVDKALTSDEERNNAQLEFDDEPKVINWGDSALGENEL</sequence>
<accession>Q9PZ51</accession>
<accession>Q9WSA9</accession>
<keyword id="KW-0013">ADP-ribosylation</keyword>
<keyword id="KW-1015">Disulfide bond</keyword>
<keyword id="KW-1040">Host Golgi apparatus</keyword>
<keyword id="KW-0597">Phosphoprotein</keyword>
<keyword id="KW-0687">Ribonucleoprotein</keyword>
<keyword id="KW-0694">RNA-binding</keyword>
<keyword id="KW-0804">Transcription</keyword>
<keyword id="KW-0805">Transcription regulation</keyword>
<keyword id="KW-0543">Viral nucleoprotein</keyword>
<keyword id="KW-0946">Virion</keyword>
<dbReference type="EMBL" id="AF111995">
    <property type="protein sequence ID" value="AAF23871.1"/>
    <property type="molecule type" value="Genomic_RNA"/>
</dbReference>
<dbReference type="EMBL" id="AF072913">
    <property type="protein sequence ID" value="AAD39044.1"/>
    <property type="molecule type" value="Genomic_RNA"/>
</dbReference>
<dbReference type="SMR" id="Q9PZ51"/>
<dbReference type="GO" id="GO:0044172">
    <property type="term" value="C:host cell endoplasmic reticulum-Golgi intermediate compartment"/>
    <property type="evidence" value="ECO:0007669"/>
    <property type="project" value="UniProtKB-SubCell"/>
</dbReference>
<dbReference type="GO" id="GO:0044177">
    <property type="term" value="C:host cell Golgi apparatus"/>
    <property type="evidence" value="ECO:0007669"/>
    <property type="project" value="UniProtKB-SubCell"/>
</dbReference>
<dbReference type="GO" id="GO:1990904">
    <property type="term" value="C:ribonucleoprotein complex"/>
    <property type="evidence" value="ECO:0007669"/>
    <property type="project" value="UniProtKB-KW"/>
</dbReference>
<dbReference type="GO" id="GO:0019013">
    <property type="term" value="C:viral nucleocapsid"/>
    <property type="evidence" value="ECO:0007669"/>
    <property type="project" value="UniProtKB-UniRule"/>
</dbReference>
<dbReference type="GO" id="GO:0003723">
    <property type="term" value="F:RNA binding"/>
    <property type="evidence" value="ECO:0007669"/>
    <property type="project" value="UniProtKB-UniRule"/>
</dbReference>
<dbReference type="CDD" id="cd21595">
    <property type="entry name" value="CoV_N-CTD"/>
    <property type="match status" value="1"/>
</dbReference>
<dbReference type="CDD" id="cd21554">
    <property type="entry name" value="CoV_N-NTD"/>
    <property type="match status" value="1"/>
</dbReference>
<dbReference type="HAMAP" id="MF_04097">
    <property type="entry name" value="GAMMA_CORONA_NCAP"/>
    <property type="match status" value="1"/>
</dbReference>
<dbReference type="InterPro" id="IPR044344">
    <property type="entry name" value="N_prot_C_CoV"/>
</dbReference>
<dbReference type="InterPro" id="IPR044345">
    <property type="entry name" value="N_prot_N_CoV"/>
</dbReference>
<dbReference type="InterPro" id="IPR042547">
    <property type="entry name" value="NCAP_gCoV"/>
</dbReference>
<dbReference type="InterPro" id="IPR001218">
    <property type="entry name" value="Nucleocap_CoV"/>
</dbReference>
<dbReference type="InterPro" id="IPR037179">
    <property type="entry name" value="Nucleocapsid_C"/>
</dbReference>
<dbReference type="InterPro" id="IPR037195">
    <property type="entry name" value="Nucleocapsid_N"/>
</dbReference>
<dbReference type="Pfam" id="PF00937">
    <property type="entry name" value="CoV_nucleocap"/>
    <property type="match status" value="1"/>
</dbReference>
<dbReference type="PIRSF" id="PIRSF003888">
    <property type="entry name" value="Corona_nucleocap"/>
    <property type="match status" value="1"/>
</dbReference>
<dbReference type="SUPFAM" id="SSF110304">
    <property type="entry name" value="Coronavirus RNA-binding domain"/>
    <property type="match status" value="1"/>
</dbReference>
<dbReference type="SUPFAM" id="SSF103068">
    <property type="entry name" value="Nucleocapsid protein dimerization domain"/>
    <property type="match status" value="1"/>
</dbReference>
<dbReference type="PROSITE" id="PS51929">
    <property type="entry name" value="COV_N_CTD"/>
    <property type="match status" value="1"/>
</dbReference>
<dbReference type="PROSITE" id="PS51928">
    <property type="entry name" value="COV_N_NTD"/>
    <property type="match status" value="1"/>
</dbReference>
<reference key="1">
    <citation type="journal article" date="1999" name="Virus Res.">
        <title>Sequence analysis of the turkey coronavirus nucleocapsid protein gene and 3' untranslated region identifies the virus as a close relative of infectious bronchitis virus.</title>
        <authorList>
            <person name="Breslin J.J."/>
            <person name="Smith L.G."/>
            <person name="Fuller F.J."/>
            <person name="Guy J.S."/>
        </authorList>
    </citation>
    <scope>NUCLEOTIDE SEQUENCE [GENOMIC RNA]</scope>
</reference>
<reference key="2">
    <citation type="journal article" date="1999" name="Intervirology">
        <title>Sequence analysis of the matrix/nucleocapsid gene region of turkey coronavirus.</title>
        <authorList>
            <person name="Breslin J.J."/>
            <person name="Smith L.G."/>
            <person name="Fuller F.J."/>
            <person name="Guy J.S."/>
        </authorList>
    </citation>
    <scope>NUCLEOTIDE SEQUENCE [GENOMIC RNA] OF 1-55</scope>
</reference>
<gene>
    <name evidence="1" type="primary">N</name>
</gene>
<name>NCAP_CVTIN</name>
<organism>
    <name type="scientific">Turkey coronavirus (strain Indiana)</name>
    <name type="common">TCoV</name>
    <name type="synonym">TCV</name>
    <dbReference type="NCBI Taxonomy" id="231429"/>
    <lineage>
        <taxon>Viruses</taxon>
        <taxon>Riboviria</taxon>
        <taxon>Orthornavirae</taxon>
        <taxon>Pisuviricota</taxon>
        <taxon>Pisoniviricetes</taxon>
        <taxon>Nidovirales</taxon>
        <taxon>Cornidovirineae</taxon>
        <taxon>Coronaviridae</taxon>
        <taxon>Orthocoronavirinae</taxon>
        <taxon>Gammacoronavirus</taxon>
        <taxon>Igacovirus</taxon>
        <taxon>Avian coronavirus</taxon>
    </lineage>
</organism>